<sequence>MSLKYARVLLKFSGEALMGQGQFGLDSNTLRQVVLEVKALRDLGVEVGLVVGGGNIFRGAQIEGAGIQRTTGDHMGMMATVINALALRDVIEDMGMSSVVYSAMAIEGVSHGFNANHVKKGMAEGQVAIFAAGTGSPFFTTDTAAALRGIEIDADIVLKATKVDGIYTADPAKDSSAQRLAELTYDDVIQKNLQVMDMTAFVLCRDHKMPIRVFDMFKKDAVIRIVKGEDEGTLVH</sequence>
<reference key="1">
    <citation type="journal article" date="2006" name="PLoS Biol.">
        <title>The genome of deep-sea vent chemolithoautotroph Thiomicrospira crunogena XCL-2.</title>
        <authorList>
            <person name="Scott K.M."/>
            <person name="Sievert S.M."/>
            <person name="Abril F.N."/>
            <person name="Ball L.A."/>
            <person name="Barrett C.J."/>
            <person name="Blake R.A."/>
            <person name="Boller A.J."/>
            <person name="Chain P.S.G."/>
            <person name="Clark J.A."/>
            <person name="Davis C.R."/>
            <person name="Detter C."/>
            <person name="Do K.F."/>
            <person name="Dobrinski K.P."/>
            <person name="Faza B.I."/>
            <person name="Fitzpatrick K.A."/>
            <person name="Freyermuth S.K."/>
            <person name="Harmer T.L."/>
            <person name="Hauser L.J."/>
            <person name="Huegler M."/>
            <person name="Kerfeld C.A."/>
            <person name="Klotz M.G."/>
            <person name="Kong W.W."/>
            <person name="Land M."/>
            <person name="Lapidus A."/>
            <person name="Larimer F.W."/>
            <person name="Longo D.L."/>
            <person name="Lucas S."/>
            <person name="Malfatti S.A."/>
            <person name="Massey S.E."/>
            <person name="Martin D.D."/>
            <person name="McCuddin Z."/>
            <person name="Meyer F."/>
            <person name="Moore J.L."/>
            <person name="Ocampo L.H. Jr."/>
            <person name="Paul J.H."/>
            <person name="Paulsen I.T."/>
            <person name="Reep D.K."/>
            <person name="Ren Q."/>
            <person name="Ross R.L."/>
            <person name="Sato P.Y."/>
            <person name="Thomas P."/>
            <person name="Tinkham L.E."/>
            <person name="Zeruth G.T."/>
        </authorList>
    </citation>
    <scope>NUCLEOTIDE SEQUENCE [LARGE SCALE GENOMIC DNA]</scope>
    <source>
        <strain>DSM 25203 / XCL-2</strain>
    </source>
</reference>
<organism>
    <name type="scientific">Hydrogenovibrio crunogenus (strain DSM 25203 / XCL-2)</name>
    <name type="common">Thiomicrospira crunogena</name>
    <dbReference type="NCBI Taxonomy" id="317025"/>
    <lineage>
        <taxon>Bacteria</taxon>
        <taxon>Pseudomonadati</taxon>
        <taxon>Pseudomonadota</taxon>
        <taxon>Gammaproteobacteria</taxon>
        <taxon>Thiotrichales</taxon>
        <taxon>Piscirickettsiaceae</taxon>
        <taxon>Hydrogenovibrio</taxon>
    </lineage>
</organism>
<accession>Q31G45</accession>
<protein>
    <recommendedName>
        <fullName evidence="1">Uridylate kinase</fullName>
        <shortName evidence="1">UK</shortName>
        <ecNumber evidence="1">2.7.4.22</ecNumber>
    </recommendedName>
    <alternativeName>
        <fullName evidence="1">Uridine monophosphate kinase</fullName>
        <shortName evidence="1">UMP kinase</shortName>
        <shortName evidence="1">UMPK</shortName>
    </alternativeName>
</protein>
<dbReference type="EC" id="2.7.4.22" evidence="1"/>
<dbReference type="EMBL" id="CP000109">
    <property type="protein sequence ID" value="ABB41878.1"/>
    <property type="molecule type" value="Genomic_DNA"/>
</dbReference>
<dbReference type="SMR" id="Q31G45"/>
<dbReference type="STRING" id="317025.Tcr_1283"/>
<dbReference type="KEGG" id="tcx:Tcr_1283"/>
<dbReference type="eggNOG" id="COG0528">
    <property type="taxonomic scope" value="Bacteria"/>
</dbReference>
<dbReference type="HOGENOM" id="CLU_033861_0_0_6"/>
<dbReference type="OrthoDB" id="9807458at2"/>
<dbReference type="UniPathway" id="UPA00159">
    <property type="reaction ID" value="UER00275"/>
</dbReference>
<dbReference type="GO" id="GO:0005829">
    <property type="term" value="C:cytosol"/>
    <property type="evidence" value="ECO:0007669"/>
    <property type="project" value="TreeGrafter"/>
</dbReference>
<dbReference type="GO" id="GO:0005524">
    <property type="term" value="F:ATP binding"/>
    <property type="evidence" value="ECO:0007669"/>
    <property type="project" value="UniProtKB-KW"/>
</dbReference>
<dbReference type="GO" id="GO:0033862">
    <property type="term" value="F:UMP kinase activity"/>
    <property type="evidence" value="ECO:0007669"/>
    <property type="project" value="UniProtKB-EC"/>
</dbReference>
<dbReference type="GO" id="GO:0044210">
    <property type="term" value="P:'de novo' CTP biosynthetic process"/>
    <property type="evidence" value="ECO:0007669"/>
    <property type="project" value="UniProtKB-UniRule"/>
</dbReference>
<dbReference type="GO" id="GO:0006225">
    <property type="term" value="P:UDP biosynthetic process"/>
    <property type="evidence" value="ECO:0007669"/>
    <property type="project" value="TreeGrafter"/>
</dbReference>
<dbReference type="CDD" id="cd04254">
    <property type="entry name" value="AAK_UMPK-PyrH-Ec"/>
    <property type="match status" value="1"/>
</dbReference>
<dbReference type="FunFam" id="3.40.1160.10:FF:000001">
    <property type="entry name" value="Uridylate kinase"/>
    <property type="match status" value="1"/>
</dbReference>
<dbReference type="Gene3D" id="3.40.1160.10">
    <property type="entry name" value="Acetylglutamate kinase-like"/>
    <property type="match status" value="1"/>
</dbReference>
<dbReference type="HAMAP" id="MF_01220_B">
    <property type="entry name" value="PyrH_B"/>
    <property type="match status" value="1"/>
</dbReference>
<dbReference type="InterPro" id="IPR036393">
    <property type="entry name" value="AceGlu_kinase-like_sf"/>
</dbReference>
<dbReference type="InterPro" id="IPR001048">
    <property type="entry name" value="Asp/Glu/Uridylate_kinase"/>
</dbReference>
<dbReference type="InterPro" id="IPR011817">
    <property type="entry name" value="Uridylate_kinase"/>
</dbReference>
<dbReference type="InterPro" id="IPR015963">
    <property type="entry name" value="Uridylate_kinase_bac"/>
</dbReference>
<dbReference type="NCBIfam" id="TIGR02075">
    <property type="entry name" value="pyrH_bact"/>
    <property type="match status" value="1"/>
</dbReference>
<dbReference type="PANTHER" id="PTHR42833">
    <property type="entry name" value="URIDYLATE KINASE"/>
    <property type="match status" value="1"/>
</dbReference>
<dbReference type="PANTHER" id="PTHR42833:SF4">
    <property type="entry name" value="URIDYLATE KINASE PUMPKIN, CHLOROPLASTIC"/>
    <property type="match status" value="1"/>
</dbReference>
<dbReference type="Pfam" id="PF00696">
    <property type="entry name" value="AA_kinase"/>
    <property type="match status" value="1"/>
</dbReference>
<dbReference type="PIRSF" id="PIRSF005650">
    <property type="entry name" value="Uridylate_kin"/>
    <property type="match status" value="1"/>
</dbReference>
<dbReference type="SUPFAM" id="SSF53633">
    <property type="entry name" value="Carbamate kinase-like"/>
    <property type="match status" value="1"/>
</dbReference>
<comment type="function">
    <text evidence="1">Catalyzes the reversible phosphorylation of UMP to UDP.</text>
</comment>
<comment type="catalytic activity">
    <reaction evidence="1">
        <text>UMP + ATP = UDP + ADP</text>
        <dbReference type="Rhea" id="RHEA:24400"/>
        <dbReference type="ChEBI" id="CHEBI:30616"/>
        <dbReference type="ChEBI" id="CHEBI:57865"/>
        <dbReference type="ChEBI" id="CHEBI:58223"/>
        <dbReference type="ChEBI" id="CHEBI:456216"/>
        <dbReference type="EC" id="2.7.4.22"/>
    </reaction>
</comment>
<comment type="activity regulation">
    <text evidence="1">Inhibited by UTP.</text>
</comment>
<comment type="pathway">
    <text evidence="1">Pyrimidine metabolism; CTP biosynthesis via de novo pathway; UDP from UMP (UMPK route): step 1/1.</text>
</comment>
<comment type="subunit">
    <text evidence="1">Homohexamer.</text>
</comment>
<comment type="subcellular location">
    <subcellularLocation>
        <location evidence="1">Cytoplasm</location>
    </subcellularLocation>
</comment>
<comment type="similarity">
    <text evidence="1">Belongs to the UMP kinase family.</text>
</comment>
<keyword id="KW-0067">ATP-binding</keyword>
<keyword id="KW-0963">Cytoplasm</keyword>
<keyword id="KW-0418">Kinase</keyword>
<keyword id="KW-0547">Nucleotide-binding</keyword>
<keyword id="KW-0665">Pyrimidine biosynthesis</keyword>
<keyword id="KW-0808">Transferase</keyword>
<gene>
    <name evidence="1" type="primary">pyrH</name>
    <name type="ordered locus">Tcr_1283</name>
</gene>
<proteinExistence type="inferred from homology"/>
<name>PYRH_HYDCU</name>
<evidence type="ECO:0000255" key="1">
    <source>
        <dbReference type="HAMAP-Rule" id="MF_01220"/>
    </source>
</evidence>
<feature type="chain" id="PRO_0000323977" description="Uridylate kinase">
    <location>
        <begin position="1"/>
        <end position="236"/>
    </location>
</feature>
<feature type="binding site" evidence="1">
    <location>
        <begin position="11"/>
        <end position="14"/>
    </location>
    <ligand>
        <name>ATP</name>
        <dbReference type="ChEBI" id="CHEBI:30616"/>
    </ligand>
</feature>
<feature type="binding site" evidence="1">
    <location>
        <position position="53"/>
    </location>
    <ligand>
        <name>UMP</name>
        <dbReference type="ChEBI" id="CHEBI:57865"/>
    </ligand>
</feature>
<feature type="binding site" evidence="1">
    <location>
        <position position="54"/>
    </location>
    <ligand>
        <name>ATP</name>
        <dbReference type="ChEBI" id="CHEBI:30616"/>
    </ligand>
</feature>
<feature type="binding site" evidence="1">
    <location>
        <position position="58"/>
    </location>
    <ligand>
        <name>ATP</name>
        <dbReference type="ChEBI" id="CHEBI:30616"/>
    </ligand>
</feature>
<feature type="binding site" evidence="1">
    <location>
        <position position="73"/>
    </location>
    <ligand>
        <name>UMP</name>
        <dbReference type="ChEBI" id="CHEBI:57865"/>
    </ligand>
</feature>
<feature type="binding site" evidence="1">
    <location>
        <begin position="134"/>
        <end position="141"/>
    </location>
    <ligand>
        <name>UMP</name>
        <dbReference type="ChEBI" id="CHEBI:57865"/>
    </ligand>
</feature>
<feature type="binding site" evidence="1">
    <location>
        <position position="161"/>
    </location>
    <ligand>
        <name>ATP</name>
        <dbReference type="ChEBI" id="CHEBI:30616"/>
    </ligand>
</feature>
<feature type="binding site" evidence="1">
    <location>
        <position position="167"/>
    </location>
    <ligand>
        <name>ATP</name>
        <dbReference type="ChEBI" id="CHEBI:30616"/>
    </ligand>
</feature>
<feature type="binding site" evidence="1">
    <location>
        <position position="170"/>
    </location>
    <ligand>
        <name>ATP</name>
        <dbReference type="ChEBI" id="CHEBI:30616"/>
    </ligand>
</feature>